<proteinExistence type="evidence at protein level"/>
<protein>
    <recommendedName>
        <fullName>Exocyst complex component 4</fullName>
    </recommendedName>
    <alternativeName>
        <fullName>Exocyst complex component Sec8</fullName>
    </alternativeName>
</protein>
<organism>
    <name type="scientific">Homo sapiens</name>
    <name type="common">Human</name>
    <dbReference type="NCBI Taxonomy" id="9606"/>
    <lineage>
        <taxon>Eukaryota</taxon>
        <taxon>Metazoa</taxon>
        <taxon>Chordata</taxon>
        <taxon>Craniata</taxon>
        <taxon>Vertebrata</taxon>
        <taxon>Euteleostomi</taxon>
        <taxon>Mammalia</taxon>
        <taxon>Eutheria</taxon>
        <taxon>Euarchontoglires</taxon>
        <taxon>Primates</taxon>
        <taxon>Haplorrhini</taxon>
        <taxon>Catarrhini</taxon>
        <taxon>Hominidae</taxon>
        <taxon>Homo</taxon>
    </lineage>
</organism>
<name>EXOC4_HUMAN</name>
<comment type="function">
    <text evidence="1">Component of the exocyst complex involved in the docking of exocytic vesicles with fusion sites on the plasma membrane.</text>
</comment>
<comment type="subunit">
    <text evidence="1 5 6">The exocyst complex is composed of EXOC1, EXOC2, EXOC3, EXOC4, EXOC5, EXOC6, EXOC7 and EXOC8 (By similarity). Interacts with BIRC6/bruce (PubMed:18329369). Interacts with MYRIP (By similarity). Interacts with SH3BP1; required for the localization of both SH3BP1 and the exocyst to the leading edge of migrating cells (PubMed:21658605). Interacts with SLC6A9 (By similarity).</text>
</comment>
<comment type="interaction">
    <interactant intactId="EBI-355383">
        <id>Q96A65</id>
    </interactant>
    <interactant intactId="EBI-1765160">
        <id>Q9NR09</id>
        <label>BIRC6</label>
    </interactant>
    <organismsDiffer>false</organismsDiffer>
    <experiments>3</experiments>
</comment>
<comment type="interaction">
    <interactant intactId="EBI-355383">
        <id>Q96A65</id>
    </interactant>
    <interactant intactId="EBI-297353">
        <id>P00533</id>
        <label>EGFR</label>
    </interactant>
    <organismsDiffer>false</organismsDiffer>
    <experiments>2</experiments>
</comment>
<comment type="interaction">
    <interactant intactId="EBI-355383">
        <id>Q96A65</id>
    </interactant>
    <interactant intactId="EBI-1045313">
        <id>Q9NV70</id>
        <label>EXOC1</label>
    </interactant>
    <organismsDiffer>false</organismsDiffer>
    <experiments>6</experiments>
</comment>
<comment type="interaction">
    <interactant intactId="EBI-355383">
        <id>Q96A65</id>
    </interactant>
    <interactant intactId="EBI-742102">
        <id>Q8IYI6</id>
        <label>EXOC8</label>
    </interactant>
    <organismsDiffer>false</organismsDiffer>
    <experiments>7</experiments>
</comment>
<comment type="interaction">
    <interactant intactId="EBI-355383">
        <id>Q96A65</id>
    </interactant>
    <interactant intactId="EBI-3267258">
        <id>Q86VI4</id>
        <label>LAPTM4B</label>
    </interactant>
    <organismsDiffer>false</organismsDiffer>
    <experiments>2</experiments>
</comment>
<comment type="interaction">
    <interactant intactId="EBI-355383">
        <id>Q96A65</id>
    </interactant>
    <interactant intactId="EBI-2864109">
        <id>Q13496</id>
        <label>MTM1</label>
    </interactant>
    <organismsDiffer>false</organismsDiffer>
    <experiments>2</experiments>
</comment>
<comment type="interaction">
    <interactant intactId="EBI-355383">
        <id>Q96A65</id>
    </interactant>
    <interactant intactId="EBI-1023301">
        <id>O60271</id>
        <label>SPAG9</label>
    </interactant>
    <organismsDiffer>false</organismsDiffer>
    <experiments>3</experiments>
</comment>
<comment type="interaction">
    <interactant intactId="EBI-355383">
        <id>Q96A65</id>
    </interactant>
    <interactant intactId="EBI-644828">
        <id>O70172</id>
        <label>Pip4k2a</label>
    </interactant>
    <organismsDiffer>true</organismsDiffer>
    <experiments>3</experiments>
</comment>
<comment type="interaction">
    <interactant intactId="EBI-17869840">
        <id>Q96A65-2</id>
    </interactant>
    <interactant intactId="EBI-10175300">
        <id>Q8TD31-3</id>
        <label>CCHCR1</label>
    </interactant>
    <organismsDiffer>false</organismsDiffer>
    <experiments>3</experiments>
</comment>
<comment type="interaction">
    <interactant intactId="EBI-17869840">
        <id>Q96A65-2</id>
    </interactant>
    <interactant intactId="EBI-11962928">
        <id>Q9UI47-2</id>
        <label>CTNNA3</label>
    </interactant>
    <organismsDiffer>false</organismsDiffer>
    <experiments>3</experiments>
</comment>
<comment type="interaction">
    <interactant intactId="EBI-17869840">
        <id>Q96A65-2</id>
    </interactant>
    <interactant intactId="EBI-6164177">
        <id>Q92805</id>
        <label>GOLGA1</label>
    </interactant>
    <organismsDiffer>false</organismsDiffer>
    <experiments>3</experiments>
</comment>
<comment type="interaction">
    <interactant intactId="EBI-17869840">
        <id>Q96A65-2</id>
    </interactant>
    <interactant intactId="EBI-8068204">
        <id>Q9UK53-2</id>
        <label>ING1</label>
    </interactant>
    <organismsDiffer>false</organismsDiffer>
    <experiments>3</experiments>
</comment>
<comment type="interaction">
    <interactant intactId="EBI-17869840">
        <id>Q96A65-2</id>
    </interactant>
    <interactant intactId="EBI-11978579">
        <id>O95983-2</id>
        <label>MBD3</label>
    </interactant>
    <organismsDiffer>false</organismsDiffer>
    <experiments>3</experiments>
</comment>
<comment type="interaction">
    <interactant intactId="EBI-17869840">
        <id>Q96A65-2</id>
    </interactant>
    <interactant intactId="EBI-455078">
        <id>Q969G3</id>
        <label>SMARCE1</label>
    </interactant>
    <organismsDiffer>false</organismsDiffer>
    <experiments>3</experiments>
</comment>
<comment type="subcellular location">
    <subcellularLocation>
        <location evidence="3">Midbody</location>
        <location evidence="3">Midbody ring</location>
    </subcellularLocation>
    <subcellularLocation>
        <location evidence="1">Cell projection</location>
    </subcellularLocation>
    <subcellularLocation>
        <location evidence="7">Cytoplasm</location>
        <location evidence="7">Cytoskeleton</location>
        <location evidence="7">Microtubule organizing center</location>
        <location evidence="7">Centrosome</location>
    </subcellularLocation>
    <text evidence="1 3">Colocalizes with CNTRL/centriolin at the midbody ring (PubMed:16213214). Localizes at the leading edge of migrating cells (By similarity).</text>
</comment>
<comment type="alternative products">
    <event type="alternative splicing"/>
    <isoform>
        <id>Q96A65-1</id>
        <name>1</name>
        <sequence type="displayed"/>
    </isoform>
    <isoform>
        <id>Q96A65-2</id>
        <name>2</name>
        <sequence type="described" ref="VSP_047159"/>
    </isoform>
</comment>
<comment type="similarity">
    <text evidence="9">Belongs to the SEC8 family.</text>
</comment>
<feature type="initiator methionine" description="Removed" evidence="8 15">
    <location>
        <position position="1"/>
    </location>
</feature>
<feature type="chain" id="PRO_0000118934" description="Exocyst complex component 4">
    <location>
        <begin position="2"/>
        <end position="974"/>
    </location>
</feature>
<feature type="coiled-coil region" evidence="2">
    <location>
        <begin position="32"/>
        <end position="114"/>
    </location>
</feature>
<feature type="modified residue" description="N-acetylalanine" evidence="8 15">
    <location>
        <position position="2"/>
    </location>
</feature>
<feature type="modified residue" description="N6-acetyllysine" evidence="12">
    <location>
        <position position="9"/>
    </location>
</feature>
<feature type="modified residue" description="Phosphoserine" evidence="16">
    <location>
        <position position="32"/>
    </location>
</feature>
<feature type="modified residue" description="Phosphoserine" evidence="16 17">
    <location>
        <position position="226"/>
    </location>
</feature>
<feature type="modified residue" description="Phosphothreonine" evidence="16">
    <location>
        <position position="233"/>
    </location>
</feature>
<feature type="modified residue" description="Phosphothreonine" evidence="10 11 13 14 16">
    <location>
        <position position="237"/>
    </location>
</feature>
<feature type="modified residue" description="Phosphoserine" evidence="16">
    <location>
        <position position="468"/>
    </location>
</feature>
<feature type="splice variant" id="VSP_047159" description="In isoform 2." evidence="9">
    <location>
        <begin position="474"/>
        <end position="974"/>
    </location>
</feature>
<feature type="sequence variant" id="VAR_036292" description="In a colorectal cancer sample; somatic mutation." evidence="4">
    <original>S</original>
    <variation>F</variation>
    <location>
        <position position="220"/>
    </location>
</feature>
<feature type="sequence variant" id="VAR_036293" description="In a colorectal cancer sample; somatic mutation; dbSNP:rs768209201." evidence="4">
    <original>A</original>
    <variation>T</variation>
    <location>
        <position position="599"/>
    </location>
</feature>
<feature type="sequence conflict" description="In Ref. 3; CAD39134." evidence="9" ref="3">
    <original>P</original>
    <variation>S</variation>
    <location>
        <position position="293"/>
    </location>
</feature>
<feature type="sequence conflict" description="In Ref. 9; AAF66445." evidence="9" ref="9">
    <original>L</original>
    <variation>T</variation>
    <location>
        <position position="338"/>
    </location>
</feature>
<feature type="strand" evidence="18">
    <location>
        <begin position="971"/>
        <end position="973"/>
    </location>
</feature>
<accession>Q96A65</accession>
<accession>E9PED2</accession>
<accession>Q541U8</accession>
<accession>Q9C0G4</accession>
<accession>Q9H9K0</accession>
<accession>Q9P102</accession>
<sequence>MAAEAAGGKYRSTVSKSKDPSGLLISVIRTLSTSDDVEDRENEKGRLEEAYEKCDRDLDELIVQHYTELTTAIRTYQSITERITNSRNKIKQVKENLLSCKMLLHCKRDELRKLWIEGIEHKHVLNLLDEIENIKQVPQKLEQCMASKHYLSATDMLVSAVESLEGPLLQVEGLSDLRLELHSKKMNLHLVLIDELHRHLYIKSTSRVVQRNKEKGKISSLVKDASVPLIDVTNLPTPRKFLDTSHYSTAGSSSVREINLQDIKEDLELDPEENSTLFMGILIKGLAKLKKIPETVKAIIERLEQELKQIVKRSTTQVADSGYQRGENVTVENQPRLLLELLELLFDKFNAVAAAHSVVLGYLQDTVVTPLTQQEDIKLYDMADVWVKIQDVLQMLLTEYLDMKNTRTASEPSAQLSYASTGREFAAFFAKKKPQRPKNSLFKFESSSHAISMSAYLREQRRELYSRSGELQGGPDDNLIEGGGTKFVCKPGARNITVIFHPLLRFIQEIEHALGLGPAKQCPLREFLTVYIKNIFLNQVLAEINKEIEGVTKTSDPLKILANADTMKVLGVQRPLLQSTIIVEKTVQDLLNLMHDLSAYSDQFLNMVCVKLQEYKDTCTAAYRGIVQSEEKLVISASWAKDDDISRLLKSLPNWMNMAQPKQLRPKREEEEDFIRAAFGKESEVLIGNLGDKLIPPQDILRDVSDLKALANMHESLEWLASRTKSAFSNLSTSQMLSPAQDSHTNTDLPPVSEQIMQTLSELAKSFQDMADRCLLVLHLEVRVHCFHYLIPLAKEGNYAIVANVESMDYDPLVVKLNKDISAIEEAMSASLQQHKFQYIFEGLGHLISCILINGAQYFRRISESGIKKMCRNIFVLQQNLTNITMSREADLDFARQYYEMLYNTADELLNLVVDQGVKYTELEYIHALTLLHRSQTGVGELTTQNTRLQRLKEIICEQAAIKQATKDKKITTV</sequence>
<dbReference type="EMBL" id="AF380839">
    <property type="protein sequence ID" value="AAK57456.1"/>
    <property type="molecule type" value="mRNA"/>
</dbReference>
<dbReference type="EMBL" id="AK022751">
    <property type="protein sequence ID" value="BAB14225.1"/>
    <property type="molecule type" value="mRNA"/>
</dbReference>
<dbReference type="EMBL" id="AK027688">
    <property type="protein sequence ID" value="BAB55298.1"/>
    <property type="molecule type" value="mRNA"/>
</dbReference>
<dbReference type="EMBL" id="AL831989">
    <property type="protein sequence ID" value="CAD89977.1"/>
    <property type="molecule type" value="mRNA"/>
</dbReference>
<dbReference type="EMBL" id="AL834475">
    <property type="protein sequence ID" value="CAD39134.1"/>
    <property type="molecule type" value="mRNA"/>
</dbReference>
<dbReference type="EMBL" id="AC007790">
    <property type="status" value="NOT_ANNOTATED_CDS"/>
    <property type="molecule type" value="Genomic_DNA"/>
</dbReference>
<dbReference type="EMBL" id="AC009178">
    <property type="status" value="NOT_ANNOTATED_CDS"/>
    <property type="molecule type" value="Genomic_DNA"/>
</dbReference>
<dbReference type="EMBL" id="AC009180">
    <property type="status" value="NOT_ANNOTATED_CDS"/>
    <property type="molecule type" value="Genomic_DNA"/>
</dbReference>
<dbReference type="EMBL" id="AC009358">
    <property type="status" value="NOT_ANNOTATED_CDS"/>
    <property type="molecule type" value="Genomic_DNA"/>
</dbReference>
<dbReference type="EMBL" id="AC024086">
    <property type="status" value="NOT_ANNOTATED_CDS"/>
    <property type="molecule type" value="Genomic_DNA"/>
</dbReference>
<dbReference type="EMBL" id="AC083872">
    <property type="status" value="NOT_ANNOTATED_CDS"/>
    <property type="molecule type" value="Genomic_DNA"/>
</dbReference>
<dbReference type="EMBL" id="AC083875">
    <property type="status" value="NOT_ANNOTATED_CDS"/>
    <property type="molecule type" value="Genomic_DNA"/>
</dbReference>
<dbReference type="EMBL" id="AC093147">
    <property type="status" value="NOT_ANNOTATED_CDS"/>
    <property type="molecule type" value="Genomic_DNA"/>
</dbReference>
<dbReference type="EMBL" id="CH236950">
    <property type="protein sequence ID" value="EAL24073.1"/>
    <property type="molecule type" value="Genomic_DNA"/>
</dbReference>
<dbReference type="EMBL" id="CH471070">
    <property type="protein sequence ID" value="EAW83804.1"/>
    <property type="molecule type" value="Genomic_DNA"/>
</dbReference>
<dbReference type="EMBL" id="AB051486">
    <property type="protein sequence ID" value="BAB21790.1"/>
    <property type="molecule type" value="mRNA"/>
</dbReference>
<dbReference type="EMBL" id="AF132734">
    <property type="protein sequence ID" value="AAF66445.1"/>
    <property type="molecule type" value="mRNA"/>
</dbReference>
<dbReference type="CCDS" id="CCDS43648.1">
    <molecule id="Q96A65-2"/>
</dbReference>
<dbReference type="CCDS" id="CCDS5829.1">
    <molecule id="Q96A65-1"/>
</dbReference>
<dbReference type="RefSeq" id="NP_001032203.1">
    <molecule id="Q96A65-2"/>
    <property type="nucleotide sequence ID" value="NM_001037126.2"/>
</dbReference>
<dbReference type="RefSeq" id="NP_068579.3">
    <molecule id="Q96A65-1"/>
    <property type="nucleotide sequence ID" value="NM_021807.3"/>
</dbReference>
<dbReference type="PDB" id="7PC5">
    <property type="method" value="X-ray"/>
    <property type="resolution" value="1.70 A"/>
    <property type="chains" value="B=965-974"/>
</dbReference>
<dbReference type="PDBsum" id="7PC5"/>
<dbReference type="SMR" id="Q96A65"/>
<dbReference type="BioGRID" id="121906">
    <property type="interactions" value="214"/>
</dbReference>
<dbReference type="ComplexPortal" id="CPX-4943">
    <property type="entry name" value="Exocyst, EXOC6 variant"/>
</dbReference>
<dbReference type="ComplexPortal" id="CPX-4944">
    <property type="entry name" value="Exocyst, EXOC6B variant"/>
</dbReference>
<dbReference type="CORUM" id="Q96A65"/>
<dbReference type="DIP" id="DIP-32976N"/>
<dbReference type="FunCoup" id="Q96A65">
    <property type="interactions" value="2845"/>
</dbReference>
<dbReference type="IntAct" id="Q96A65">
    <property type="interactions" value="122"/>
</dbReference>
<dbReference type="MINT" id="Q96A65"/>
<dbReference type="STRING" id="9606.ENSP00000253861"/>
<dbReference type="TCDB" id="1.F.2.1.2">
    <property type="family name" value="the octameric exocyst (exocyst) family"/>
</dbReference>
<dbReference type="GlyGen" id="Q96A65">
    <property type="glycosylation" value="2 sites, 1 N-linked glycan (1 site), 1 O-linked glycan (1 site)"/>
</dbReference>
<dbReference type="iPTMnet" id="Q96A65"/>
<dbReference type="PhosphoSitePlus" id="Q96A65"/>
<dbReference type="SwissPalm" id="Q96A65"/>
<dbReference type="BioMuta" id="EXOC4"/>
<dbReference type="DMDM" id="24418674"/>
<dbReference type="jPOST" id="Q96A65"/>
<dbReference type="MassIVE" id="Q96A65"/>
<dbReference type="PaxDb" id="9606-ENSP00000253861"/>
<dbReference type="PeptideAtlas" id="Q96A65"/>
<dbReference type="ProteomicsDB" id="19862"/>
<dbReference type="ProteomicsDB" id="75923">
    <molecule id="Q96A65-1"/>
</dbReference>
<dbReference type="Pumba" id="Q96A65"/>
<dbReference type="Antibodypedia" id="18039">
    <property type="antibodies" value="184 antibodies from 28 providers"/>
</dbReference>
<dbReference type="DNASU" id="60412"/>
<dbReference type="Ensembl" id="ENST00000253861.5">
    <molecule id="Q96A65-1"/>
    <property type="protein sequence ID" value="ENSP00000253861.4"/>
    <property type="gene ID" value="ENSG00000131558.16"/>
</dbReference>
<dbReference type="Ensembl" id="ENST00000393161.6">
    <molecule id="Q96A65-2"/>
    <property type="protein sequence ID" value="ENSP00000376868.2"/>
    <property type="gene ID" value="ENSG00000131558.16"/>
</dbReference>
<dbReference type="Ensembl" id="ENST00000850617.1">
    <molecule id="Q96A65-1"/>
    <property type="protein sequence ID" value="ENSP00000520904.1"/>
    <property type="gene ID" value="ENSG00000131558.16"/>
</dbReference>
<dbReference type="GeneID" id="60412"/>
<dbReference type="KEGG" id="hsa:60412"/>
<dbReference type="MANE-Select" id="ENST00000253861.5">
    <property type="protein sequence ID" value="ENSP00000253861.4"/>
    <property type="RefSeq nucleotide sequence ID" value="NM_021807.4"/>
    <property type="RefSeq protein sequence ID" value="NP_068579.3"/>
</dbReference>
<dbReference type="UCSC" id="uc003vrj.4">
    <molecule id="Q96A65-1"/>
    <property type="organism name" value="human"/>
</dbReference>
<dbReference type="AGR" id="HGNC:30389"/>
<dbReference type="CTD" id="60412"/>
<dbReference type="DisGeNET" id="60412"/>
<dbReference type="GeneCards" id="EXOC4"/>
<dbReference type="HGNC" id="HGNC:30389">
    <property type="gene designation" value="EXOC4"/>
</dbReference>
<dbReference type="HPA" id="ENSG00000131558">
    <property type="expression patterns" value="Low tissue specificity"/>
</dbReference>
<dbReference type="MalaCards" id="EXOC4"/>
<dbReference type="MIM" id="608185">
    <property type="type" value="gene"/>
</dbReference>
<dbReference type="neXtProt" id="NX_Q96A65"/>
<dbReference type="OpenTargets" id="ENSG00000131558"/>
<dbReference type="PharmGKB" id="PA134944654"/>
<dbReference type="VEuPathDB" id="HostDB:ENSG00000131558"/>
<dbReference type="eggNOG" id="KOG3691">
    <property type="taxonomic scope" value="Eukaryota"/>
</dbReference>
<dbReference type="GeneTree" id="ENSGT00390000001439"/>
<dbReference type="HOGENOM" id="CLU_029933_0_0_1"/>
<dbReference type="InParanoid" id="Q96A65"/>
<dbReference type="OMA" id="HMEVRCR"/>
<dbReference type="OrthoDB" id="272977at2759"/>
<dbReference type="PAN-GO" id="Q96A65">
    <property type="GO annotations" value="6 GO annotations based on evolutionary models"/>
</dbReference>
<dbReference type="PhylomeDB" id="Q96A65"/>
<dbReference type="TreeFam" id="TF313954"/>
<dbReference type="PathwayCommons" id="Q96A65"/>
<dbReference type="Reactome" id="R-HSA-1445148">
    <property type="pathway name" value="Translocation of SLC2A4 (GLUT4) to the plasma membrane"/>
</dbReference>
<dbReference type="Reactome" id="R-HSA-264876">
    <property type="pathway name" value="Insulin processing"/>
</dbReference>
<dbReference type="Reactome" id="R-HSA-5620916">
    <property type="pathway name" value="VxPx cargo-targeting to cilium"/>
</dbReference>
<dbReference type="SignaLink" id="Q96A65"/>
<dbReference type="SIGNOR" id="Q96A65"/>
<dbReference type="BioGRID-ORCS" id="60412">
    <property type="hits" value="349 hits in 1175 CRISPR screens"/>
</dbReference>
<dbReference type="CD-CODE" id="FB4E32DD">
    <property type="entry name" value="Presynaptic clusters and postsynaptic densities"/>
</dbReference>
<dbReference type="ChiTaRS" id="EXOC4">
    <property type="organism name" value="human"/>
</dbReference>
<dbReference type="GeneWiki" id="EXOC4"/>
<dbReference type="GenomeRNAi" id="60412"/>
<dbReference type="Pharos" id="Q96A65">
    <property type="development level" value="Tbio"/>
</dbReference>
<dbReference type="PRO" id="PR:Q96A65"/>
<dbReference type="Proteomes" id="UP000005640">
    <property type="component" value="Chromosome 7"/>
</dbReference>
<dbReference type="RNAct" id="Q96A65">
    <property type="molecule type" value="protein"/>
</dbReference>
<dbReference type="Bgee" id="ENSG00000131558">
    <property type="expression patterns" value="Expressed in bone marrow cell and 186 other cell types or tissues"/>
</dbReference>
<dbReference type="GO" id="GO:0005813">
    <property type="term" value="C:centrosome"/>
    <property type="evidence" value="ECO:0000314"/>
    <property type="project" value="UniProtKB"/>
</dbReference>
<dbReference type="GO" id="GO:0005737">
    <property type="term" value="C:cytoplasm"/>
    <property type="evidence" value="ECO:0000314"/>
    <property type="project" value="LIFEdb"/>
</dbReference>
<dbReference type="GO" id="GO:0005829">
    <property type="term" value="C:cytosol"/>
    <property type="evidence" value="ECO:0000304"/>
    <property type="project" value="Reactome"/>
</dbReference>
<dbReference type="GO" id="GO:0000145">
    <property type="term" value="C:exocyst"/>
    <property type="evidence" value="ECO:0000318"/>
    <property type="project" value="GO_Central"/>
</dbReference>
<dbReference type="GO" id="GO:0090543">
    <property type="term" value="C:Flemming body"/>
    <property type="evidence" value="ECO:0007669"/>
    <property type="project" value="UniProtKB-SubCell"/>
</dbReference>
<dbReference type="GO" id="GO:0032584">
    <property type="term" value="C:growth cone membrane"/>
    <property type="evidence" value="ECO:0000318"/>
    <property type="project" value="GO_Central"/>
</dbReference>
<dbReference type="GO" id="GO:0016020">
    <property type="term" value="C:membrane"/>
    <property type="evidence" value="ECO:0007005"/>
    <property type="project" value="UniProtKB"/>
</dbReference>
<dbReference type="GO" id="GO:0005902">
    <property type="term" value="C:microvillus"/>
    <property type="evidence" value="ECO:0007669"/>
    <property type="project" value="Ensembl"/>
</dbReference>
<dbReference type="GO" id="GO:0035748">
    <property type="term" value="C:myelin sheath abaxonal region"/>
    <property type="evidence" value="ECO:0007669"/>
    <property type="project" value="Ensembl"/>
</dbReference>
<dbReference type="GO" id="GO:0005886">
    <property type="term" value="C:plasma membrane"/>
    <property type="evidence" value="ECO:0000304"/>
    <property type="project" value="Reactome"/>
</dbReference>
<dbReference type="GO" id="GO:0045202">
    <property type="term" value="C:synapse"/>
    <property type="evidence" value="ECO:0000318"/>
    <property type="project" value="GO_Central"/>
</dbReference>
<dbReference type="GO" id="GO:0030165">
    <property type="term" value="F:PDZ domain binding"/>
    <property type="evidence" value="ECO:0007669"/>
    <property type="project" value="Ensembl"/>
</dbReference>
<dbReference type="GO" id="GO:0007268">
    <property type="term" value="P:chemical synaptic transmission"/>
    <property type="evidence" value="ECO:0000318"/>
    <property type="project" value="GO_Central"/>
</dbReference>
<dbReference type="GO" id="GO:0006887">
    <property type="term" value="P:exocytosis"/>
    <property type="evidence" value="ECO:0000318"/>
    <property type="project" value="GO_Central"/>
</dbReference>
<dbReference type="GO" id="GO:0006893">
    <property type="term" value="P:Golgi to plasma membrane transport"/>
    <property type="evidence" value="ECO:0000318"/>
    <property type="project" value="GO_Central"/>
</dbReference>
<dbReference type="GO" id="GO:0090148">
    <property type="term" value="P:membrane fission"/>
    <property type="evidence" value="ECO:0000303"/>
    <property type="project" value="ComplexPortal"/>
</dbReference>
<dbReference type="GO" id="GO:0000281">
    <property type="term" value="P:mitotic cytokinesis"/>
    <property type="evidence" value="ECO:0000303"/>
    <property type="project" value="ComplexPortal"/>
</dbReference>
<dbReference type="GO" id="GO:0048341">
    <property type="term" value="P:paraxial mesoderm formation"/>
    <property type="evidence" value="ECO:0007669"/>
    <property type="project" value="Ensembl"/>
</dbReference>
<dbReference type="GO" id="GO:0071806">
    <property type="term" value="P:protein transmembrane transport"/>
    <property type="evidence" value="ECO:0007669"/>
    <property type="project" value="Ensembl"/>
</dbReference>
<dbReference type="GO" id="GO:0016241">
    <property type="term" value="P:regulation of macroautophagy"/>
    <property type="evidence" value="ECO:0000304"/>
    <property type="project" value="ParkinsonsUK-UCL"/>
</dbReference>
<dbReference type="GO" id="GO:0006904">
    <property type="term" value="P:vesicle docking involved in exocytosis"/>
    <property type="evidence" value="ECO:0000303"/>
    <property type="project" value="ComplexPortal"/>
</dbReference>
<dbReference type="GO" id="GO:0090522">
    <property type="term" value="P:vesicle tethering involved in exocytosis"/>
    <property type="evidence" value="ECO:0000303"/>
    <property type="project" value="ComplexPortal"/>
</dbReference>
<dbReference type="InterPro" id="IPR039682">
    <property type="entry name" value="Sec8/EXOC4"/>
</dbReference>
<dbReference type="InterPro" id="IPR007191">
    <property type="entry name" value="Sec8_exocyst_N"/>
</dbReference>
<dbReference type="InterPro" id="IPR048630">
    <property type="entry name" value="Sec8_M"/>
</dbReference>
<dbReference type="PANTHER" id="PTHR14146">
    <property type="entry name" value="EXOCYST COMPLEX COMPONENT 4"/>
    <property type="match status" value="1"/>
</dbReference>
<dbReference type="PANTHER" id="PTHR14146:SF0">
    <property type="entry name" value="EXOCYST COMPLEX COMPONENT 4"/>
    <property type="match status" value="1"/>
</dbReference>
<dbReference type="Pfam" id="PF20652">
    <property type="entry name" value="Sec8_C"/>
    <property type="match status" value="1"/>
</dbReference>
<dbReference type="Pfam" id="PF04048">
    <property type="entry name" value="Sec8_N"/>
    <property type="match status" value="1"/>
</dbReference>
<gene>
    <name type="primary">EXOC4</name>
    <name type="synonym">KIAA1699</name>
    <name type="synonym">SEC8</name>
    <name type="synonym">SEC8L1</name>
</gene>
<evidence type="ECO:0000250" key="1">
    <source>
        <dbReference type="UniProtKB" id="Q62824"/>
    </source>
</evidence>
<evidence type="ECO:0000255" key="2"/>
<evidence type="ECO:0000269" key="3">
    <source>
    </source>
</evidence>
<evidence type="ECO:0000269" key="4">
    <source>
    </source>
</evidence>
<evidence type="ECO:0000269" key="5">
    <source>
    </source>
</evidence>
<evidence type="ECO:0000269" key="6">
    <source>
    </source>
</evidence>
<evidence type="ECO:0000269" key="7">
    <source>
    </source>
</evidence>
<evidence type="ECO:0000269" key="8">
    <source ref="7"/>
</evidence>
<evidence type="ECO:0000305" key="9"/>
<evidence type="ECO:0007744" key="10">
    <source>
    </source>
</evidence>
<evidence type="ECO:0007744" key="11">
    <source>
    </source>
</evidence>
<evidence type="ECO:0007744" key="12">
    <source>
    </source>
</evidence>
<evidence type="ECO:0007744" key="13">
    <source>
    </source>
</evidence>
<evidence type="ECO:0007744" key="14">
    <source>
    </source>
</evidence>
<evidence type="ECO:0007744" key="15">
    <source>
    </source>
</evidence>
<evidence type="ECO:0007744" key="16">
    <source>
    </source>
</evidence>
<evidence type="ECO:0007744" key="17">
    <source>
    </source>
</evidence>
<evidence type="ECO:0007829" key="18">
    <source>
        <dbReference type="PDB" id="7PC5"/>
    </source>
</evidence>
<keyword id="KW-0002">3D-structure</keyword>
<keyword id="KW-0007">Acetylation</keyword>
<keyword id="KW-0025">Alternative splicing</keyword>
<keyword id="KW-0966">Cell projection</keyword>
<keyword id="KW-0175">Coiled coil</keyword>
<keyword id="KW-0963">Cytoplasm</keyword>
<keyword id="KW-0206">Cytoskeleton</keyword>
<keyword id="KW-0903">Direct protein sequencing</keyword>
<keyword id="KW-0268">Exocytosis</keyword>
<keyword id="KW-0597">Phosphoprotein</keyword>
<keyword id="KW-0653">Protein transport</keyword>
<keyword id="KW-1267">Proteomics identification</keyword>
<keyword id="KW-1185">Reference proteome</keyword>
<keyword id="KW-0813">Transport</keyword>
<reference key="1">
    <citation type="submission" date="2001-05" db="EMBL/GenBank/DDBJ databases">
        <title>Human secretory protein Sec8 related to testis development.</title>
        <authorList>
            <person name="Sha J.H."/>
        </authorList>
    </citation>
    <scope>NUCLEOTIDE SEQUENCE [MRNA] (ISOFORM 1)</scope>
    <source>
        <tissue>Testis</tissue>
    </source>
</reference>
<reference key="2">
    <citation type="journal article" date="2004" name="Nat. Genet.">
        <title>Complete sequencing and characterization of 21,243 full-length human cDNAs.</title>
        <authorList>
            <person name="Ota T."/>
            <person name="Suzuki Y."/>
            <person name="Nishikawa T."/>
            <person name="Otsuki T."/>
            <person name="Sugiyama T."/>
            <person name="Irie R."/>
            <person name="Wakamatsu A."/>
            <person name="Hayashi K."/>
            <person name="Sato H."/>
            <person name="Nagai K."/>
            <person name="Kimura K."/>
            <person name="Makita H."/>
            <person name="Sekine M."/>
            <person name="Obayashi M."/>
            <person name="Nishi T."/>
            <person name="Shibahara T."/>
            <person name="Tanaka T."/>
            <person name="Ishii S."/>
            <person name="Yamamoto J."/>
            <person name="Saito K."/>
            <person name="Kawai Y."/>
            <person name="Isono Y."/>
            <person name="Nakamura Y."/>
            <person name="Nagahari K."/>
            <person name="Murakami K."/>
            <person name="Yasuda T."/>
            <person name="Iwayanagi T."/>
            <person name="Wagatsuma M."/>
            <person name="Shiratori A."/>
            <person name="Sudo H."/>
            <person name="Hosoiri T."/>
            <person name="Kaku Y."/>
            <person name="Kodaira H."/>
            <person name="Kondo H."/>
            <person name="Sugawara M."/>
            <person name="Takahashi M."/>
            <person name="Kanda K."/>
            <person name="Yokoi T."/>
            <person name="Furuya T."/>
            <person name="Kikkawa E."/>
            <person name="Omura Y."/>
            <person name="Abe K."/>
            <person name="Kamihara K."/>
            <person name="Katsuta N."/>
            <person name="Sato K."/>
            <person name="Tanikawa M."/>
            <person name="Yamazaki M."/>
            <person name="Ninomiya K."/>
            <person name="Ishibashi T."/>
            <person name="Yamashita H."/>
            <person name="Murakawa K."/>
            <person name="Fujimori K."/>
            <person name="Tanai H."/>
            <person name="Kimata M."/>
            <person name="Watanabe M."/>
            <person name="Hiraoka S."/>
            <person name="Chiba Y."/>
            <person name="Ishida S."/>
            <person name="Ono Y."/>
            <person name="Takiguchi S."/>
            <person name="Watanabe S."/>
            <person name="Yosida M."/>
            <person name="Hotuta T."/>
            <person name="Kusano J."/>
            <person name="Kanehori K."/>
            <person name="Takahashi-Fujii A."/>
            <person name="Hara H."/>
            <person name="Tanase T.-O."/>
            <person name="Nomura Y."/>
            <person name="Togiya S."/>
            <person name="Komai F."/>
            <person name="Hara R."/>
            <person name="Takeuchi K."/>
            <person name="Arita M."/>
            <person name="Imose N."/>
            <person name="Musashino K."/>
            <person name="Yuuki H."/>
            <person name="Oshima A."/>
            <person name="Sasaki N."/>
            <person name="Aotsuka S."/>
            <person name="Yoshikawa Y."/>
            <person name="Matsunawa H."/>
            <person name="Ichihara T."/>
            <person name="Shiohata N."/>
            <person name="Sano S."/>
            <person name="Moriya S."/>
            <person name="Momiyama H."/>
            <person name="Satoh N."/>
            <person name="Takami S."/>
            <person name="Terashima Y."/>
            <person name="Suzuki O."/>
            <person name="Nakagawa S."/>
            <person name="Senoh A."/>
            <person name="Mizoguchi H."/>
            <person name="Goto Y."/>
            <person name="Shimizu F."/>
            <person name="Wakebe H."/>
            <person name="Hishigaki H."/>
            <person name="Watanabe T."/>
            <person name="Sugiyama A."/>
            <person name="Takemoto M."/>
            <person name="Kawakami B."/>
            <person name="Yamazaki M."/>
            <person name="Watanabe K."/>
            <person name="Kumagai A."/>
            <person name="Itakura S."/>
            <person name="Fukuzumi Y."/>
            <person name="Fujimori Y."/>
            <person name="Komiyama M."/>
            <person name="Tashiro H."/>
            <person name="Tanigami A."/>
            <person name="Fujiwara T."/>
            <person name="Ono T."/>
            <person name="Yamada K."/>
            <person name="Fujii Y."/>
            <person name="Ozaki K."/>
            <person name="Hirao M."/>
            <person name="Ohmori Y."/>
            <person name="Kawabata A."/>
            <person name="Hikiji T."/>
            <person name="Kobatake N."/>
            <person name="Inagaki H."/>
            <person name="Ikema Y."/>
            <person name="Okamoto S."/>
            <person name="Okitani R."/>
            <person name="Kawakami T."/>
            <person name="Noguchi S."/>
            <person name="Itoh T."/>
            <person name="Shigeta K."/>
            <person name="Senba T."/>
            <person name="Matsumura K."/>
            <person name="Nakajima Y."/>
            <person name="Mizuno T."/>
            <person name="Morinaga M."/>
            <person name="Sasaki M."/>
            <person name="Togashi T."/>
            <person name="Oyama M."/>
            <person name="Hata H."/>
            <person name="Watanabe M."/>
            <person name="Komatsu T."/>
            <person name="Mizushima-Sugano J."/>
            <person name="Satoh T."/>
            <person name="Shirai Y."/>
            <person name="Takahashi Y."/>
            <person name="Nakagawa K."/>
            <person name="Okumura K."/>
            <person name="Nagase T."/>
            <person name="Nomura N."/>
            <person name="Kikuchi H."/>
            <person name="Masuho Y."/>
            <person name="Yamashita R."/>
            <person name="Nakai K."/>
            <person name="Yada T."/>
            <person name="Nakamura Y."/>
            <person name="Ohara O."/>
            <person name="Isogai T."/>
            <person name="Sugano S."/>
        </authorList>
    </citation>
    <scope>NUCLEOTIDE SEQUENCE [LARGE SCALE MRNA]</scope>
</reference>
<reference key="3">
    <citation type="journal article" date="2007" name="BMC Genomics">
        <title>The full-ORF clone resource of the German cDNA consortium.</title>
        <authorList>
            <person name="Bechtel S."/>
            <person name="Rosenfelder H."/>
            <person name="Duda A."/>
            <person name="Schmidt C.P."/>
            <person name="Ernst U."/>
            <person name="Wellenreuther R."/>
            <person name="Mehrle A."/>
            <person name="Schuster C."/>
            <person name="Bahr A."/>
            <person name="Bloecker H."/>
            <person name="Heubner D."/>
            <person name="Hoerlein A."/>
            <person name="Michel G."/>
            <person name="Wedler H."/>
            <person name="Koehrer K."/>
            <person name="Ottenwaelder B."/>
            <person name="Poustka A."/>
            <person name="Wiemann S."/>
            <person name="Schupp I."/>
        </authorList>
    </citation>
    <scope>NUCLEOTIDE SEQUENCE [LARGE SCALE MRNA] (ISOFORM 1)</scope>
    <source>
        <tissue>Melanoma</tissue>
        <tissue>Skeletal muscle</tissue>
    </source>
</reference>
<reference key="4">
    <citation type="journal article" date="2003" name="Science">
        <title>Human chromosome 7: DNA sequence and biology.</title>
        <authorList>
            <person name="Scherer S.W."/>
            <person name="Cheung J."/>
            <person name="MacDonald J.R."/>
            <person name="Osborne L.R."/>
            <person name="Nakabayashi K."/>
            <person name="Herbrick J.-A."/>
            <person name="Carson A.R."/>
            <person name="Parker-Katiraee L."/>
            <person name="Skaug J."/>
            <person name="Khaja R."/>
            <person name="Zhang J."/>
            <person name="Hudek A.K."/>
            <person name="Li M."/>
            <person name="Haddad M."/>
            <person name="Duggan G.E."/>
            <person name="Fernandez B.A."/>
            <person name="Kanematsu E."/>
            <person name="Gentles S."/>
            <person name="Christopoulos C.C."/>
            <person name="Choufani S."/>
            <person name="Kwasnicka D."/>
            <person name="Zheng X.H."/>
            <person name="Lai Z."/>
            <person name="Nusskern D.R."/>
            <person name="Zhang Q."/>
            <person name="Gu Z."/>
            <person name="Lu F."/>
            <person name="Zeesman S."/>
            <person name="Nowaczyk M.J."/>
            <person name="Teshima I."/>
            <person name="Chitayat D."/>
            <person name="Shuman C."/>
            <person name="Weksberg R."/>
            <person name="Zackai E.H."/>
            <person name="Grebe T.A."/>
            <person name="Cox S.R."/>
            <person name="Kirkpatrick S.J."/>
            <person name="Rahman N."/>
            <person name="Friedman J.M."/>
            <person name="Heng H.H.Q."/>
            <person name="Pelicci P.G."/>
            <person name="Lo-Coco F."/>
            <person name="Belloni E."/>
            <person name="Shaffer L.G."/>
            <person name="Pober B."/>
            <person name="Morton C.C."/>
            <person name="Gusella J.F."/>
            <person name="Bruns G.A.P."/>
            <person name="Korf B.R."/>
            <person name="Quade B.J."/>
            <person name="Ligon A.H."/>
            <person name="Ferguson H."/>
            <person name="Higgins A.W."/>
            <person name="Leach N.T."/>
            <person name="Herrick S.R."/>
            <person name="Lemyre E."/>
            <person name="Farra C.G."/>
            <person name="Kim H.-G."/>
            <person name="Summers A.M."/>
            <person name="Gripp K.W."/>
            <person name="Roberts W."/>
            <person name="Szatmari P."/>
            <person name="Winsor E.J.T."/>
            <person name="Grzeschik K.-H."/>
            <person name="Teebi A."/>
            <person name="Minassian B.A."/>
            <person name="Kere J."/>
            <person name="Armengol L."/>
            <person name="Pujana M.A."/>
            <person name="Estivill X."/>
            <person name="Wilson M.D."/>
            <person name="Koop B.F."/>
            <person name="Tosi S."/>
            <person name="Moore G.E."/>
            <person name="Boright A.P."/>
            <person name="Zlotorynski E."/>
            <person name="Kerem B."/>
            <person name="Kroisel P.M."/>
            <person name="Petek E."/>
            <person name="Oscier D.G."/>
            <person name="Mould S.J."/>
            <person name="Doehner H."/>
            <person name="Doehner K."/>
            <person name="Rommens J.M."/>
            <person name="Vincent J.B."/>
            <person name="Venter J.C."/>
            <person name="Li P.W."/>
            <person name="Mural R.J."/>
            <person name="Adams M.D."/>
            <person name="Tsui L.-C."/>
        </authorList>
    </citation>
    <scope>NUCLEOTIDE SEQUENCE [LARGE SCALE GENOMIC DNA]</scope>
</reference>
<reference key="5">
    <citation type="journal article" date="2003" name="Nature">
        <title>The DNA sequence of human chromosome 7.</title>
        <authorList>
            <person name="Hillier L.W."/>
            <person name="Fulton R.S."/>
            <person name="Fulton L.A."/>
            <person name="Graves T.A."/>
            <person name="Pepin K.H."/>
            <person name="Wagner-McPherson C."/>
            <person name="Layman D."/>
            <person name="Maas J."/>
            <person name="Jaeger S."/>
            <person name="Walker R."/>
            <person name="Wylie K."/>
            <person name="Sekhon M."/>
            <person name="Becker M.C."/>
            <person name="O'Laughlin M.D."/>
            <person name="Schaller M.E."/>
            <person name="Fewell G.A."/>
            <person name="Delehaunty K.D."/>
            <person name="Miner T.L."/>
            <person name="Nash W.E."/>
            <person name="Cordes M."/>
            <person name="Du H."/>
            <person name="Sun H."/>
            <person name="Edwards J."/>
            <person name="Bradshaw-Cordum H."/>
            <person name="Ali J."/>
            <person name="Andrews S."/>
            <person name="Isak A."/>
            <person name="Vanbrunt A."/>
            <person name="Nguyen C."/>
            <person name="Du F."/>
            <person name="Lamar B."/>
            <person name="Courtney L."/>
            <person name="Kalicki J."/>
            <person name="Ozersky P."/>
            <person name="Bielicki L."/>
            <person name="Scott K."/>
            <person name="Holmes A."/>
            <person name="Harkins R."/>
            <person name="Harris A."/>
            <person name="Strong C.M."/>
            <person name="Hou S."/>
            <person name="Tomlinson C."/>
            <person name="Dauphin-Kohlberg S."/>
            <person name="Kozlowicz-Reilly A."/>
            <person name="Leonard S."/>
            <person name="Rohlfing T."/>
            <person name="Rock S.M."/>
            <person name="Tin-Wollam A.-M."/>
            <person name="Abbott A."/>
            <person name="Minx P."/>
            <person name="Maupin R."/>
            <person name="Strowmatt C."/>
            <person name="Latreille P."/>
            <person name="Miller N."/>
            <person name="Johnson D."/>
            <person name="Murray J."/>
            <person name="Woessner J.P."/>
            <person name="Wendl M.C."/>
            <person name="Yang S.-P."/>
            <person name="Schultz B.R."/>
            <person name="Wallis J.W."/>
            <person name="Spieth J."/>
            <person name="Bieri T.A."/>
            <person name="Nelson J.O."/>
            <person name="Berkowicz N."/>
            <person name="Wohldmann P.E."/>
            <person name="Cook L.L."/>
            <person name="Hickenbotham M.T."/>
            <person name="Eldred J."/>
            <person name="Williams D."/>
            <person name="Bedell J.A."/>
            <person name="Mardis E.R."/>
            <person name="Clifton S.W."/>
            <person name="Chissoe S.L."/>
            <person name="Marra M.A."/>
            <person name="Raymond C."/>
            <person name="Haugen E."/>
            <person name="Gillett W."/>
            <person name="Zhou Y."/>
            <person name="James R."/>
            <person name="Phelps K."/>
            <person name="Iadanoto S."/>
            <person name="Bubb K."/>
            <person name="Simms E."/>
            <person name="Levy R."/>
            <person name="Clendenning J."/>
            <person name="Kaul R."/>
            <person name="Kent W.J."/>
            <person name="Furey T.S."/>
            <person name="Baertsch R.A."/>
            <person name="Brent M.R."/>
            <person name="Keibler E."/>
            <person name="Flicek P."/>
            <person name="Bork P."/>
            <person name="Suyama M."/>
            <person name="Bailey J.A."/>
            <person name="Portnoy M.E."/>
            <person name="Torrents D."/>
            <person name="Chinwalla A.T."/>
            <person name="Gish W.R."/>
            <person name="Eddy S.R."/>
            <person name="McPherson J.D."/>
            <person name="Olson M.V."/>
            <person name="Eichler E.E."/>
            <person name="Green E.D."/>
            <person name="Waterston R.H."/>
            <person name="Wilson R.K."/>
        </authorList>
    </citation>
    <scope>NUCLEOTIDE SEQUENCE [LARGE SCALE GENOMIC DNA]</scope>
</reference>
<reference key="6">
    <citation type="submission" date="2005-07" db="EMBL/GenBank/DDBJ databases">
        <authorList>
            <person name="Mural R.J."/>
            <person name="Istrail S."/>
            <person name="Sutton G.G."/>
            <person name="Florea L."/>
            <person name="Halpern A.L."/>
            <person name="Mobarry C.M."/>
            <person name="Lippert R."/>
            <person name="Walenz B."/>
            <person name="Shatkay H."/>
            <person name="Dew I."/>
            <person name="Miller J.R."/>
            <person name="Flanigan M.J."/>
            <person name="Edwards N.J."/>
            <person name="Bolanos R."/>
            <person name="Fasulo D."/>
            <person name="Halldorsson B.V."/>
            <person name="Hannenhalli S."/>
            <person name="Turner R."/>
            <person name="Yooseph S."/>
            <person name="Lu F."/>
            <person name="Nusskern D.R."/>
            <person name="Shue B.C."/>
            <person name="Zheng X.H."/>
            <person name="Zhong F."/>
            <person name="Delcher A.L."/>
            <person name="Huson D.H."/>
            <person name="Kravitz S.A."/>
            <person name="Mouchard L."/>
            <person name="Reinert K."/>
            <person name="Remington K.A."/>
            <person name="Clark A.G."/>
            <person name="Waterman M.S."/>
            <person name="Eichler E.E."/>
            <person name="Adams M.D."/>
            <person name="Hunkapiller M.W."/>
            <person name="Myers E.W."/>
            <person name="Venter J.C."/>
        </authorList>
    </citation>
    <scope>NUCLEOTIDE SEQUENCE [LARGE SCALE GENOMIC DNA]</scope>
</reference>
<reference key="7">
    <citation type="submission" date="2009-06" db="UniProtKB">
        <authorList>
            <person name="Bienvenut W.V."/>
            <person name="Campbell A."/>
            <person name="Ozanne B.W."/>
        </authorList>
    </citation>
    <scope>PROTEIN SEQUENCE OF 2-11; 224-239; 314-325 AND 889-896</scope>
    <scope>CLEAVAGE OF INITIATOR METHIONINE</scope>
    <scope>ACETYLATION AT ALA-2</scope>
    <scope>IDENTIFICATION BY MASS SPECTROMETRY</scope>
    <source>
        <tissue>Foreskin fibroblast</tissue>
    </source>
</reference>
<reference key="8">
    <citation type="journal article" date="2000" name="DNA Res.">
        <title>Prediction of the coding sequences of unidentified human genes. XIX. The complete sequences of 100 new cDNA clones from brain which code for large proteins in vitro.</title>
        <authorList>
            <person name="Nagase T."/>
            <person name="Kikuno R."/>
            <person name="Hattori A."/>
            <person name="Kondo Y."/>
            <person name="Okumura K."/>
            <person name="Ohara O."/>
        </authorList>
    </citation>
    <scope>NUCLEOTIDE SEQUENCE [LARGE SCALE MRNA] OF 9-974 (ISOFORM 1)</scope>
    <source>
        <tissue>Brain</tissue>
    </source>
</reference>
<reference key="9">
    <citation type="submission" date="1999-03" db="EMBL/GenBank/DDBJ databases">
        <authorList>
            <person name="Luo W.Q."/>
            <person name="Chen J.H."/>
            <person name="Huang X.W."/>
            <person name="Zhou Y."/>
            <person name="Zhou H.J."/>
            <person name="Hu S.N."/>
            <person name="Yuan J.G."/>
        </authorList>
    </citation>
    <scope>NUCLEOTIDE SEQUENCE [MRNA] OF 338-974 (ISOFORM 1)</scope>
</reference>
<reference key="10">
    <citation type="journal article" date="2005" name="Cell">
        <title>Centriolin anchoring of exocyst and SNARE complexes at the midbody is required for secretory-vesicle-mediated abscission.</title>
        <authorList>
            <person name="Gromley A."/>
            <person name="Yeaman C."/>
            <person name="Rosa J."/>
            <person name="Redick S."/>
            <person name="Chen C.-T."/>
            <person name="Mirabelle S."/>
            <person name="Guha M."/>
            <person name="Sillibourne J."/>
            <person name="Doxsey S.J."/>
        </authorList>
    </citation>
    <scope>SUBCELLULAR LOCATION</scope>
</reference>
<reference key="11">
    <citation type="journal article" date="2006" name="Nat. Biotechnol.">
        <title>A probability-based approach for high-throughput protein phosphorylation analysis and site localization.</title>
        <authorList>
            <person name="Beausoleil S.A."/>
            <person name="Villen J."/>
            <person name="Gerber S.A."/>
            <person name="Rush J."/>
            <person name="Gygi S.P."/>
        </authorList>
    </citation>
    <scope>PHOSPHORYLATION [LARGE SCALE ANALYSIS] AT THR-237</scope>
    <scope>IDENTIFICATION BY MASS SPECTROMETRY [LARGE SCALE ANALYSIS]</scope>
    <source>
        <tissue>Cervix carcinoma</tissue>
    </source>
</reference>
<reference key="12">
    <citation type="journal article" date="2008" name="Cell">
        <title>Final stages of cytokinesis and midbody ring formation are controlled by BRUCE.</title>
        <authorList>
            <person name="Pohl C."/>
            <person name="Jentsch S."/>
        </authorList>
    </citation>
    <scope>INTERACTION WITH BIRC6/BRUCE</scope>
</reference>
<reference key="13">
    <citation type="journal article" date="2008" name="Proc. Natl. Acad. Sci. U.S.A.">
        <title>A quantitative atlas of mitotic phosphorylation.</title>
        <authorList>
            <person name="Dephoure N."/>
            <person name="Zhou C."/>
            <person name="Villen J."/>
            <person name="Beausoleil S.A."/>
            <person name="Bakalarski C.E."/>
            <person name="Elledge S.J."/>
            <person name="Gygi S.P."/>
        </authorList>
    </citation>
    <scope>PHOSPHORYLATION [LARGE SCALE ANALYSIS] AT THR-237</scope>
    <scope>IDENTIFICATION BY MASS SPECTROMETRY [LARGE SCALE ANALYSIS]</scope>
    <source>
        <tissue>Cervix carcinoma</tissue>
    </source>
</reference>
<reference key="14">
    <citation type="journal article" date="2009" name="Sci. Signal.">
        <title>Quantitative phosphoproteomic analysis of T cell receptor signaling reveals system-wide modulation of protein-protein interactions.</title>
        <authorList>
            <person name="Mayya V."/>
            <person name="Lundgren D.H."/>
            <person name="Hwang S.-I."/>
            <person name="Rezaul K."/>
            <person name="Wu L."/>
            <person name="Eng J.K."/>
            <person name="Rodionov V."/>
            <person name="Han D.K."/>
        </authorList>
    </citation>
    <scope>PHOSPHORYLATION [LARGE SCALE ANALYSIS] AT THR-237</scope>
    <scope>IDENTIFICATION BY MASS SPECTROMETRY [LARGE SCALE ANALYSIS]</scope>
    <source>
        <tissue>Leukemic T-cell</tissue>
    </source>
</reference>
<reference key="15">
    <citation type="journal article" date="2009" name="Science">
        <title>Lysine acetylation targets protein complexes and co-regulates major cellular functions.</title>
        <authorList>
            <person name="Choudhary C."/>
            <person name="Kumar C."/>
            <person name="Gnad F."/>
            <person name="Nielsen M.L."/>
            <person name="Rehman M."/>
            <person name="Walther T.C."/>
            <person name="Olsen J.V."/>
            <person name="Mann M."/>
        </authorList>
    </citation>
    <scope>ACETYLATION [LARGE SCALE ANALYSIS] AT LYS-9</scope>
    <scope>IDENTIFICATION BY MASS SPECTROMETRY [LARGE SCALE ANALYSIS]</scope>
</reference>
<reference key="16">
    <citation type="journal article" date="2010" name="Sci. Signal.">
        <title>Quantitative phosphoproteomics reveals widespread full phosphorylation site occupancy during mitosis.</title>
        <authorList>
            <person name="Olsen J.V."/>
            <person name="Vermeulen M."/>
            <person name="Santamaria A."/>
            <person name="Kumar C."/>
            <person name="Miller M.L."/>
            <person name="Jensen L.J."/>
            <person name="Gnad F."/>
            <person name="Cox J."/>
            <person name="Jensen T.S."/>
            <person name="Nigg E.A."/>
            <person name="Brunak S."/>
            <person name="Mann M."/>
        </authorList>
    </citation>
    <scope>PHOSPHORYLATION [LARGE SCALE ANALYSIS] AT THR-237</scope>
    <scope>IDENTIFICATION BY MASS SPECTROMETRY [LARGE SCALE ANALYSIS]</scope>
    <source>
        <tissue>Cervix carcinoma</tissue>
    </source>
</reference>
<reference key="17">
    <citation type="journal article" date="2011" name="BMC Syst. Biol.">
        <title>Initial characterization of the human central proteome.</title>
        <authorList>
            <person name="Burkard T.R."/>
            <person name="Planyavsky M."/>
            <person name="Kaupe I."/>
            <person name="Breitwieser F.P."/>
            <person name="Buerckstuemmer T."/>
            <person name="Bennett K.L."/>
            <person name="Superti-Furga G."/>
            <person name="Colinge J."/>
        </authorList>
    </citation>
    <scope>IDENTIFICATION BY MASS SPECTROMETRY [LARGE SCALE ANALYSIS]</scope>
</reference>
<reference key="18">
    <citation type="journal article" date="2011" name="Mol. Cell">
        <title>SH3BP1, an exocyst-associated RhoGAP, inactivates Rac1 at the front to drive cell motility.</title>
        <authorList>
            <person name="Parrini M.C."/>
            <person name="Sadou-Dubourgnoux A."/>
            <person name="Aoki K."/>
            <person name="Kunida K."/>
            <person name="Biondini M."/>
            <person name="Hatzoglou A."/>
            <person name="Poullet P."/>
            <person name="Formstecher E."/>
            <person name="Yeaman C."/>
            <person name="Matsuda M."/>
            <person name="Rosse C."/>
            <person name="Camonis J."/>
        </authorList>
    </citation>
    <scope>INTERACTION WITH SH3BP1</scope>
</reference>
<reference key="19">
    <citation type="journal article" date="2012" name="Proc. Natl. Acad. Sci. U.S.A.">
        <title>N-terminal acetylome analyses and functional insights of the N-terminal acetyltransferase NatB.</title>
        <authorList>
            <person name="Van Damme P."/>
            <person name="Lasa M."/>
            <person name="Polevoda B."/>
            <person name="Gazquez C."/>
            <person name="Elosegui-Artola A."/>
            <person name="Kim D.S."/>
            <person name="De Juan-Pardo E."/>
            <person name="Demeyer K."/>
            <person name="Hole K."/>
            <person name="Larrea E."/>
            <person name="Timmerman E."/>
            <person name="Prieto J."/>
            <person name="Arnesen T."/>
            <person name="Sherman F."/>
            <person name="Gevaert K."/>
            <person name="Aldabe R."/>
        </authorList>
    </citation>
    <scope>ACETYLATION [LARGE SCALE ANALYSIS] AT ALA-2</scope>
    <scope>CLEAVAGE OF INITIATOR METHIONINE [LARGE SCALE ANALYSIS]</scope>
    <scope>IDENTIFICATION BY MASS SPECTROMETRY [LARGE SCALE ANALYSIS]</scope>
</reference>
<reference key="20">
    <citation type="journal article" date="2013" name="J. Proteome Res.">
        <title>Toward a comprehensive characterization of a human cancer cell phosphoproteome.</title>
        <authorList>
            <person name="Zhou H."/>
            <person name="Di Palma S."/>
            <person name="Preisinger C."/>
            <person name="Peng M."/>
            <person name="Polat A.N."/>
            <person name="Heck A.J."/>
            <person name="Mohammed S."/>
        </authorList>
    </citation>
    <scope>PHOSPHORYLATION [LARGE SCALE ANALYSIS] AT SER-32; SER-226; THR-233; THR-237 AND SER-468</scope>
    <scope>IDENTIFICATION BY MASS SPECTROMETRY [LARGE SCALE ANALYSIS]</scope>
    <source>
        <tissue>Cervix carcinoma</tissue>
        <tissue>Erythroleukemia</tissue>
    </source>
</reference>
<reference key="21">
    <citation type="journal article" date="2014" name="J. Proteomics">
        <title>An enzyme assisted RP-RPLC approach for in-depth analysis of human liver phosphoproteome.</title>
        <authorList>
            <person name="Bian Y."/>
            <person name="Song C."/>
            <person name="Cheng K."/>
            <person name="Dong M."/>
            <person name="Wang F."/>
            <person name="Huang J."/>
            <person name="Sun D."/>
            <person name="Wang L."/>
            <person name="Ye M."/>
            <person name="Zou H."/>
        </authorList>
    </citation>
    <scope>PHOSPHORYLATION [LARGE SCALE ANALYSIS] AT SER-226</scope>
    <scope>IDENTIFICATION BY MASS SPECTROMETRY [LARGE SCALE ANALYSIS]</scope>
    <source>
        <tissue>Liver</tissue>
    </source>
</reference>
<reference key="22">
    <citation type="journal article" date="2015" name="Cell">
        <title>A Dynamic Protein Interaction Landscape of the Human Centrosome-Cilium Interface.</title>
        <authorList>
            <person name="Gupta G.D."/>
            <person name="Coyaud E."/>
            <person name="Goncalves J."/>
            <person name="Mojarad B.A."/>
            <person name="Liu Y."/>
            <person name="Wu Q."/>
            <person name="Gheiratmand L."/>
            <person name="Comartin D."/>
            <person name="Tkach J.M."/>
            <person name="Cheung S.W."/>
            <person name="Bashkurov M."/>
            <person name="Hasegan M."/>
            <person name="Knight J.D."/>
            <person name="Lin Z.Y."/>
            <person name="Schueler M."/>
            <person name="Hildebrandt F."/>
            <person name="Moffat J."/>
            <person name="Gingras A.C."/>
            <person name="Raught B."/>
            <person name="Pelletier L."/>
        </authorList>
    </citation>
    <scope>SUBCELLULAR LOCATION</scope>
</reference>
<reference key="23">
    <citation type="journal article" date="2006" name="Science">
        <title>The consensus coding sequences of human breast and colorectal cancers.</title>
        <authorList>
            <person name="Sjoeblom T."/>
            <person name="Jones S."/>
            <person name="Wood L.D."/>
            <person name="Parsons D.W."/>
            <person name="Lin J."/>
            <person name="Barber T.D."/>
            <person name="Mandelker D."/>
            <person name="Leary R.J."/>
            <person name="Ptak J."/>
            <person name="Silliman N."/>
            <person name="Szabo S."/>
            <person name="Buckhaults P."/>
            <person name="Farrell C."/>
            <person name="Meeh P."/>
            <person name="Markowitz S.D."/>
            <person name="Willis J."/>
            <person name="Dawson D."/>
            <person name="Willson J.K.V."/>
            <person name="Gazdar A.F."/>
            <person name="Hartigan J."/>
            <person name="Wu L."/>
            <person name="Liu C."/>
            <person name="Parmigiani G."/>
            <person name="Park B.H."/>
            <person name="Bachman K.E."/>
            <person name="Papadopoulos N."/>
            <person name="Vogelstein B."/>
            <person name="Kinzler K.W."/>
            <person name="Velculescu V.E."/>
        </authorList>
    </citation>
    <scope>VARIANTS [LARGE SCALE ANALYSIS] PHE-220 AND THR-599</scope>
</reference>